<feature type="chain" id="PRO_0000239712" description="Acetyl esterase">
    <location>
        <begin position="1"/>
        <end position="319"/>
    </location>
</feature>
<feature type="short sequence motif" description="Involved in the stabilization of the negatively charged intermediate by the formation of the oxyanion hole" evidence="1">
    <location>
        <begin position="91"/>
        <end position="93"/>
    </location>
</feature>
<feature type="active site" evidence="2">
    <location>
        <position position="165"/>
    </location>
</feature>
<feature type="active site" evidence="2">
    <location>
        <position position="262"/>
    </location>
</feature>
<feature type="active site" evidence="2">
    <location>
        <position position="292"/>
    </location>
</feature>
<accession>Q325C0</accession>
<comment type="function">
    <text evidence="2">Displays esterase activity towards short chain fatty esters (acyl chain length of up to 8 carbons). Able to hydrolyze triacetylglycerol (triacetin) and tributyrylglycerol (tributyrin), but not trioleylglycerol (triolein) or cholesterol oleate. Negatively regulates MalT activity by antagonizing maltotriose binding. Inhibits MelA galactosidase activity.</text>
</comment>
<comment type="subunit">
    <text evidence="2">Homodimer. Interacts with MalT and MelA.</text>
</comment>
<comment type="subcellular location">
    <subcellularLocation>
        <location evidence="2">Cytoplasm</location>
    </subcellularLocation>
</comment>
<comment type="similarity">
    <text evidence="2">Belongs to the 'GDXG' lipolytic enzyme family.</text>
</comment>
<name>AES_SHIBS</name>
<organism>
    <name type="scientific">Shigella boydii serotype 4 (strain Sb227)</name>
    <dbReference type="NCBI Taxonomy" id="300268"/>
    <lineage>
        <taxon>Bacteria</taxon>
        <taxon>Pseudomonadati</taxon>
        <taxon>Pseudomonadota</taxon>
        <taxon>Gammaproteobacteria</taxon>
        <taxon>Enterobacterales</taxon>
        <taxon>Enterobacteriaceae</taxon>
        <taxon>Shigella</taxon>
    </lineage>
</organism>
<protein>
    <recommendedName>
        <fullName evidence="2">Acetyl esterase</fullName>
        <ecNumber evidence="2">3.1.1.-</ecNumber>
    </recommendedName>
</protein>
<sequence>MKPENKLPVLDLISAEMKTVVNTLQPDLPSWPATGTIAEQRQYYTLERRFWNAGAPEMATRAYMVPTKYGQVETRLFCPQPDSPATLFYLHGGGFILGNLDTHDRIMRLLASYSQCTVIGIDYPLSPEARFPQAIEEIVAACCYFHQQAEDYQINMSRIGFAGDSAGAMLALASALWLRDKQIDCGKIVGVLLWYGLYGLRDSVTRRLLGGVWDGLTQQDLQMYEEAYLSNDADRESPYYCLFNNDLTREVPPCFIAGAEFDPLLDDSRLLYQTLAAHQQPCEFKLYPGTLHAFLHYSRMMKTADEALRDGAQFFTAQL</sequence>
<reference key="1">
    <citation type="journal article" date="2005" name="Nucleic Acids Res.">
        <title>Genome dynamics and diversity of Shigella species, the etiologic agents of bacillary dysentery.</title>
        <authorList>
            <person name="Yang F."/>
            <person name="Yang J."/>
            <person name="Zhang X."/>
            <person name="Chen L."/>
            <person name="Jiang Y."/>
            <person name="Yan Y."/>
            <person name="Tang X."/>
            <person name="Wang J."/>
            <person name="Xiong Z."/>
            <person name="Dong J."/>
            <person name="Xue Y."/>
            <person name="Zhu Y."/>
            <person name="Xu X."/>
            <person name="Sun L."/>
            <person name="Chen S."/>
            <person name="Nie H."/>
            <person name="Peng J."/>
            <person name="Xu J."/>
            <person name="Wang Y."/>
            <person name="Yuan Z."/>
            <person name="Wen Y."/>
            <person name="Yao Z."/>
            <person name="Shen Y."/>
            <person name="Qiang B."/>
            <person name="Hou Y."/>
            <person name="Yu J."/>
            <person name="Jin Q."/>
        </authorList>
    </citation>
    <scope>NUCLEOTIDE SEQUENCE [LARGE SCALE GENOMIC DNA]</scope>
    <source>
        <strain>Sb227</strain>
    </source>
</reference>
<evidence type="ECO:0000250" key="1">
    <source>
        <dbReference type="UniProtKB" id="Q5NUF3"/>
    </source>
</evidence>
<evidence type="ECO:0000255" key="2">
    <source>
        <dbReference type="HAMAP-Rule" id="MF_01958"/>
    </source>
</evidence>
<keyword id="KW-0963">Cytoplasm</keyword>
<keyword id="KW-0378">Hydrolase</keyword>
<keyword id="KW-0719">Serine esterase</keyword>
<proteinExistence type="inferred from homology"/>
<dbReference type="EC" id="3.1.1.-" evidence="2"/>
<dbReference type="EMBL" id="CP000036">
    <property type="protein sequence ID" value="ABB65088.1"/>
    <property type="molecule type" value="Genomic_DNA"/>
</dbReference>
<dbReference type="RefSeq" id="WP_000801835.1">
    <property type="nucleotide sequence ID" value="NC_007613.1"/>
</dbReference>
<dbReference type="SMR" id="Q325C0"/>
<dbReference type="ESTHER" id="shifl-AES">
    <property type="family name" value="Acetyl_esterase"/>
</dbReference>
<dbReference type="KEGG" id="sbo:SBO_0376"/>
<dbReference type="HOGENOM" id="CLU_012494_6_4_6"/>
<dbReference type="Proteomes" id="UP000007067">
    <property type="component" value="Chromosome"/>
</dbReference>
<dbReference type="GO" id="GO:0005737">
    <property type="term" value="C:cytoplasm"/>
    <property type="evidence" value="ECO:0007669"/>
    <property type="project" value="UniProtKB-SubCell"/>
</dbReference>
<dbReference type="GO" id="GO:0052689">
    <property type="term" value="F:carboxylic ester hydrolase activity"/>
    <property type="evidence" value="ECO:0007669"/>
    <property type="project" value="UniProtKB-UniRule"/>
</dbReference>
<dbReference type="FunFam" id="3.40.50.1820:FF:000035">
    <property type="entry name" value="Acetyl esterase"/>
    <property type="match status" value="1"/>
</dbReference>
<dbReference type="Gene3D" id="3.40.50.1820">
    <property type="entry name" value="alpha/beta hydrolase"/>
    <property type="match status" value="1"/>
</dbReference>
<dbReference type="HAMAP" id="MF_01958">
    <property type="entry name" value="Acetyl_esterase"/>
    <property type="match status" value="1"/>
</dbReference>
<dbReference type="InterPro" id="IPR013094">
    <property type="entry name" value="AB_hydrolase_3"/>
</dbReference>
<dbReference type="InterPro" id="IPR029058">
    <property type="entry name" value="AB_hydrolase_fold"/>
</dbReference>
<dbReference type="InterPro" id="IPR023508">
    <property type="entry name" value="Acetyl_esterase"/>
</dbReference>
<dbReference type="InterPro" id="IPR050300">
    <property type="entry name" value="GDXG_lipolytic_enzyme"/>
</dbReference>
<dbReference type="InterPro" id="IPR002168">
    <property type="entry name" value="Lipase_GDXG_HIS_AS"/>
</dbReference>
<dbReference type="InterPro" id="IPR033140">
    <property type="entry name" value="Lipase_GDXG_put_SER_AS"/>
</dbReference>
<dbReference type="NCBIfam" id="NF007547">
    <property type="entry name" value="PRK10162.1"/>
    <property type="match status" value="1"/>
</dbReference>
<dbReference type="PANTHER" id="PTHR48081">
    <property type="entry name" value="AB HYDROLASE SUPERFAMILY PROTEIN C4A8.06C"/>
    <property type="match status" value="1"/>
</dbReference>
<dbReference type="PANTHER" id="PTHR48081:SF8">
    <property type="entry name" value="ALPHA_BETA HYDROLASE FOLD-3 DOMAIN-CONTAINING PROTEIN-RELATED"/>
    <property type="match status" value="1"/>
</dbReference>
<dbReference type="Pfam" id="PF07859">
    <property type="entry name" value="Abhydrolase_3"/>
    <property type="match status" value="1"/>
</dbReference>
<dbReference type="SUPFAM" id="SSF53474">
    <property type="entry name" value="alpha/beta-Hydrolases"/>
    <property type="match status" value="1"/>
</dbReference>
<dbReference type="PROSITE" id="PS01173">
    <property type="entry name" value="LIPASE_GDXG_HIS"/>
    <property type="match status" value="1"/>
</dbReference>
<dbReference type="PROSITE" id="PS01174">
    <property type="entry name" value="LIPASE_GDXG_SER"/>
    <property type="match status" value="1"/>
</dbReference>
<gene>
    <name evidence="2" type="primary">aes</name>
    <name type="ordered locus">SBO_0376</name>
</gene>